<protein>
    <recommendedName>
        <fullName evidence="1">tRNA-2-methylthio-N(6)-dimethylallyladenosine synthase</fullName>
        <ecNumber evidence="1">2.8.4.3</ecNumber>
    </recommendedName>
    <alternativeName>
        <fullName evidence="1">(Dimethylallyl)adenosine tRNA methylthiotransferase MiaB</fullName>
    </alternativeName>
    <alternativeName>
        <fullName evidence="1">tRNA-i(6)A37 methylthiotransferase</fullName>
    </alternativeName>
</protein>
<evidence type="ECO:0000255" key="1">
    <source>
        <dbReference type="HAMAP-Rule" id="MF_01864"/>
    </source>
</evidence>
<evidence type="ECO:0000255" key="2">
    <source>
        <dbReference type="PROSITE-ProRule" id="PRU01266"/>
    </source>
</evidence>
<keyword id="KW-0004">4Fe-4S</keyword>
<keyword id="KW-0963">Cytoplasm</keyword>
<keyword id="KW-0408">Iron</keyword>
<keyword id="KW-0411">Iron-sulfur</keyword>
<keyword id="KW-0479">Metal-binding</keyword>
<keyword id="KW-0949">S-adenosyl-L-methionine</keyword>
<keyword id="KW-0808">Transferase</keyword>
<keyword id="KW-0819">tRNA processing</keyword>
<feature type="chain" id="PRO_0000374153" description="tRNA-2-methylthio-N(6)-dimethylallyladenosine synthase">
    <location>
        <begin position="1"/>
        <end position="484"/>
    </location>
</feature>
<feature type="domain" description="MTTase N-terminal" evidence="1">
    <location>
        <begin position="29"/>
        <end position="149"/>
    </location>
</feature>
<feature type="domain" description="Radical SAM core" evidence="2">
    <location>
        <begin position="172"/>
        <end position="401"/>
    </location>
</feature>
<feature type="domain" description="TRAM" evidence="1">
    <location>
        <begin position="404"/>
        <end position="474"/>
    </location>
</feature>
<feature type="binding site" evidence="1">
    <location>
        <position position="38"/>
    </location>
    <ligand>
        <name>[4Fe-4S] cluster</name>
        <dbReference type="ChEBI" id="CHEBI:49883"/>
        <label>1</label>
    </ligand>
</feature>
<feature type="binding site" evidence="1">
    <location>
        <position position="78"/>
    </location>
    <ligand>
        <name>[4Fe-4S] cluster</name>
        <dbReference type="ChEBI" id="CHEBI:49883"/>
        <label>1</label>
    </ligand>
</feature>
<feature type="binding site" evidence="1">
    <location>
        <position position="112"/>
    </location>
    <ligand>
        <name>[4Fe-4S] cluster</name>
        <dbReference type="ChEBI" id="CHEBI:49883"/>
        <label>1</label>
    </ligand>
</feature>
<feature type="binding site" evidence="1">
    <location>
        <position position="186"/>
    </location>
    <ligand>
        <name>[4Fe-4S] cluster</name>
        <dbReference type="ChEBI" id="CHEBI:49883"/>
        <label>2</label>
        <note>4Fe-4S-S-AdoMet</note>
    </ligand>
</feature>
<feature type="binding site" evidence="1">
    <location>
        <position position="190"/>
    </location>
    <ligand>
        <name>[4Fe-4S] cluster</name>
        <dbReference type="ChEBI" id="CHEBI:49883"/>
        <label>2</label>
        <note>4Fe-4S-S-AdoMet</note>
    </ligand>
</feature>
<feature type="binding site" evidence="1">
    <location>
        <position position="193"/>
    </location>
    <ligand>
        <name>[4Fe-4S] cluster</name>
        <dbReference type="ChEBI" id="CHEBI:49883"/>
        <label>2</label>
        <note>4Fe-4S-S-AdoMet</note>
    </ligand>
</feature>
<dbReference type="EC" id="2.8.4.3" evidence="1"/>
<dbReference type="EMBL" id="CP000605">
    <property type="protein sequence ID" value="ACD97722.1"/>
    <property type="molecule type" value="Genomic_DNA"/>
</dbReference>
<dbReference type="RefSeq" id="WP_007052635.1">
    <property type="nucleotide sequence ID" value="NC_010816.1"/>
</dbReference>
<dbReference type="SMR" id="B3DQX6"/>
<dbReference type="KEGG" id="blj:BLD_0276"/>
<dbReference type="HOGENOM" id="CLU_018697_2_2_11"/>
<dbReference type="Proteomes" id="UP000002419">
    <property type="component" value="Chromosome"/>
</dbReference>
<dbReference type="GO" id="GO:0005829">
    <property type="term" value="C:cytosol"/>
    <property type="evidence" value="ECO:0007669"/>
    <property type="project" value="TreeGrafter"/>
</dbReference>
<dbReference type="GO" id="GO:0051539">
    <property type="term" value="F:4 iron, 4 sulfur cluster binding"/>
    <property type="evidence" value="ECO:0007669"/>
    <property type="project" value="UniProtKB-UniRule"/>
</dbReference>
<dbReference type="GO" id="GO:0046872">
    <property type="term" value="F:metal ion binding"/>
    <property type="evidence" value="ECO:0007669"/>
    <property type="project" value="UniProtKB-KW"/>
</dbReference>
<dbReference type="GO" id="GO:0035597">
    <property type="term" value="F:N6-isopentenyladenosine methylthiotransferase activity"/>
    <property type="evidence" value="ECO:0007669"/>
    <property type="project" value="TreeGrafter"/>
</dbReference>
<dbReference type="CDD" id="cd01335">
    <property type="entry name" value="Radical_SAM"/>
    <property type="match status" value="1"/>
</dbReference>
<dbReference type="FunFam" id="3.40.50.12160:FF:000003">
    <property type="entry name" value="CDK5 regulatory subunit-associated protein 1"/>
    <property type="match status" value="1"/>
</dbReference>
<dbReference type="FunFam" id="3.80.30.20:FF:000001">
    <property type="entry name" value="tRNA-2-methylthio-N(6)-dimethylallyladenosine synthase 2"/>
    <property type="match status" value="1"/>
</dbReference>
<dbReference type="Gene3D" id="3.40.50.12160">
    <property type="entry name" value="Methylthiotransferase, N-terminal domain"/>
    <property type="match status" value="1"/>
</dbReference>
<dbReference type="Gene3D" id="3.80.30.20">
    <property type="entry name" value="tm_1862 like domain"/>
    <property type="match status" value="1"/>
</dbReference>
<dbReference type="HAMAP" id="MF_01864">
    <property type="entry name" value="tRNA_metthiotr_MiaB"/>
    <property type="match status" value="1"/>
</dbReference>
<dbReference type="InterPro" id="IPR006638">
    <property type="entry name" value="Elp3/MiaA/NifB-like_rSAM"/>
</dbReference>
<dbReference type="InterPro" id="IPR005839">
    <property type="entry name" value="Methylthiotransferase"/>
</dbReference>
<dbReference type="InterPro" id="IPR020612">
    <property type="entry name" value="Methylthiotransferase_CS"/>
</dbReference>
<dbReference type="InterPro" id="IPR013848">
    <property type="entry name" value="Methylthiotransferase_N"/>
</dbReference>
<dbReference type="InterPro" id="IPR038135">
    <property type="entry name" value="Methylthiotransferase_N_sf"/>
</dbReference>
<dbReference type="InterPro" id="IPR006463">
    <property type="entry name" value="MiaB_methiolase"/>
</dbReference>
<dbReference type="InterPro" id="IPR007197">
    <property type="entry name" value="rSAM"/>
</dbReference>
<dbReference type="InterPro" id="IPR023404">
    <property type="entry name" value="rSAM_horseshoe"/>
</dbReference>
<dbReference type="NCBIfam" id="TIGR01574">
    <property type="entry name" value="miaB-methiolase"/>
    <property type="match status" value="1"/>
</dbReference>
<dbReference type="NCBIfam" id="TIGR00089">
    <property type="entry name" value="MiaB/RimO family radical SAM methylthiotransferase"/>
    <property type="match status" value="1"/>
</dbReference>
<dbReference type="PANTHER" id="PTHR43020">
    <property type="entry name" value="CDK5 REGULATORY SUBUNIT-ASSOCIATED PROTEIN 1"/>
    <property type="match status" value="1"/>
</dbReference>
<dbReference type="PANTHER" id="PTHR43020:SF2">
    <property type="entry name" value="MITOCHONDRIAL TRNA METHYLTHIOTRANSFERASE CDK5RAP1"/>
    <property type="match status" value="1"/>
</dbReference>
<dbReference type="Pfam" id="PF04055">
    <property type="entry name" value="Radical_SAM"/>
    <property type="match status" value="1"/>
</dbReference>
<dbReference type="Pfam" id="PF00919">
    <property type="entry name" value="UPF0004"/>
    <property type="match status" value="1"/>
</dbReference>
<dbReference type="SFLD" id="SFLDF00273">
    <property type="entry name" value="(dimethylallyl)adenosine_tRNA"/>
    <property type="match status" value="1"/>
</dbReference>
<dbReference type="SFLD" id="SFLDG01082">
    <property type="entry name" value="B12-binding_domain_containing"/>
    <property type="match status" value="1"/>
</dbReference>
<dbReference type="SFLD" id="SFLDG01061">
    <property type="entry name" value="methylthiotransferase"/>
    <property type="match status" value="1"/>
</dbReference>
<dbReference type="SMART" id="SM00729">
    <property type="entry name" value="Elp3"/>
    <property type="match status" value="1"/>
</dbReference>
<dbReference type="SUPFAM" id="SSF102114">
    <property type="entry name" value="Radical SAM enzymes"/>
    <property type="match status" value="1"/>
</dbReference>
<dbReference type="PROSITE" id="PS51449">
    <property type="entry name" value="MTTASE_N"/>
    <property type="match status" value="1"/>
</dbReference>
<dbReference type="PROSITE" id="PS01278">
    <property type="entry name" value="MTTASE_RADICAL"/>
    <property type="match status" value="1"/>
</dbReference>
<dbReference type="PROSITE" id="PS51918">
    <property type="entry name" value="RADICAL_SAM"/>
    <property type="match status" value="1"/>
</dbReference>
<sequence length="484" mass="53161">MNEDMMTEAERASIAADGTDGLLGKRGKGVFHIHTLGCQMNVHDSERIAGVLEANGYVPATEDQINDNDLDLLVLNTCAVRENAAERMYGTIGRFNRVKLVRPNLQIAVGGCMAQLDRKKIADTAPWVSAVFGTKNIEDLPKLLDQNRATGKAQVQVTEQLRQFPSQLPAARASRISSWVAISVGCNNTCTFCIVPTTRGKEKDRRPGDILDEIRQCVADGAKEVTLLGQNVNSFGYGIGDRYAFSKLLRACGTIDGLERVRFTSPHPAAFTDDVIAAMAETPNIMHQLHFPLQSGSDRILRAMRRSYRSAKFLDILGRIRAAMPDAQISTDIIVGFPGETEEDFQQTMDVVRQARFSSAFTFIYSPRPGTPAAAMEQIPRDVVQDRFDRLVALQEQITEENLATFEGRDVEVMITGKLGKKDTDTHRVTGREKTGVLVHIGVPEGEPVPEIGDFVTATVTHAGRHNLLADPDVAAGQTYSVRH</sequence>
<accession>B3DQX6</accession>
<proteinExistence type="inferred from homology"/>
<organism>
    <name type="scientific">Bifidobacterium longum (strain DJO10A)</name>
    <dbReference type="NCBI Taxonomy" id="205913"/>
    <lineage>
        <taxon>Bacteria</taxon>
        <taxon>Bacillati</taxon>
        <taxon>Actinomycetota</taxon>
        <taxon>Actinomycetes</taxon>
        <taxon>Bifidobacteriales</taxon>
        <taxon>Bifidobacteriaceae</taxon>
        <taxon>Bifidobacterium</taxon>
    </lineage>
</organism>
<reference key="1">
    <citation type="journal article" date="2008" name="BMC Genomics">
        <title>Comparative genomic analysis of the gut bacterium Bifidobacterium longum reveals loci susceptible to deletion during pure culture growth.</title>
        <authorList>
            <person name="Lee J.H."/>
            <person name="Karamychev V.N."/>
            <person name="Kozyavkin S.A."/>
            <person name="Mills D."/>
            <person name="Pavlov A.R."/>
            <person name="Pavlova N.V."/>
            <person name="Polouchine N.N."/>
            <person name="Richardson P.M."/>
            <person name="Shakhova V.V."/>
            <person name="Slesarev A.I."/>
            <person name="Weimer B."/>
            <person name="O'Sullivan D.J."/>
        </authorList>
    </citation>
    <scope>NUCLEOTIDE SEQUENCE [LARGE SCALE GENOMIC DNA]</scope>
    <source>
        <strain>DJO10A</strain>
    </source>
</reference>
<gene>
    <name evidence="1" type="primary">miaB</name>
    <name type="ordered locus">BLD_0276</name>
</gene>
<comment type="function">
    <text evidence="1">Catalyzes the methylthiolation of N6-(dimethylallyl)adenosine (i(6)A), leading to the formation of 2-methylthio-N6-(dimethylallyl)adenosine (ms(2)i(6)A) at position 37 in tRNAs that read codons beginning with uridine.</text>
</comment>
<comment type="catalytic activity">
    <reaction evidence="1">
        <text>N(6)-dimethylallyladenosine(37) in tRNA + (sulfur carrier)-SH + AH2 + 2 S-adenosyl-L-methionine = 2-methylsulfanyl-N(6)-dimethylallyladenosine(37) in tRNA + (sulfur carrier)-H + 5'-deoxyadenosine + L-methionine + A + S-adenosyl-L-homocysteine + 2 H(+)</text>
        <dbReference type="Rhea" id="RHEA:37067"/>
        <dbReference type="Rhea" id="RHEA-COMP:10375"/>
        <dbReference type="Rhea" id="RHEA-COMP:10376"/>
        <dbReference type="Rhea" id="RHEA-COMP:14737"/>
        <dbReference type="Rhea" id="RHEA-COMP:14739"/>
        <dbReference type="ChEBI" id="CHEBI:13193"/>
        <dbReference type="ChEBI" id="CHEBI:15378"/>
        <dbReference type="ChEBI" id="CHEBI:17319"/>
        <dbReference type="ChEBI" id="CHEBI:17499"/>
        <dbReference type="ChEBI" id="CHEBI:29917"/>
        <dbReference type="ChEBI" id="CHEBI:57844"/>
        <dbReference type="ChEBI" id="CHEBI:57856"/>
        <dbReference type="ChEBI" id="CHEBI:59789"/>
        <dbReference type="ChEBI" id="CHEBI:64428"/>
        <dbReference type="ChEBI" id="CHEBI:74415"/>
        <dbReference type="ChEBI" id="CHEBI:74417"/>
        <dbReference type="EC" id="2.8.4.3"/>
    </reaction>
</comment>
<comment type="cofactor">
    <cofactor evidence="1">
        <name>[4Fe-4S] cluster</name>
        <dbReference type="ChEBI" id="CHEBI:49883"/>
    </cofactor>
    <text evidence="1">Binds 2 [4Fe-4S] clusters. One cluster is coordinated with 3 cysteines and an exchangeable S-adenosyl-L-methionine.</text>
</comment>
<comment type="subunit">
    <text evidence="1">Monomer.</text>
</comment>
<comment type="subcellular location">
    <subcellularLocation>
        <location evidence="1">Cytoplasm</location>
    </subcellularLocation>
</comment>
<comment type="similarity">
    <text evidence="1">Belongs to the methylthiotransferase family. MiaB subfamily.</text>
</comment>
<name>MIAB_BIFLD</name>